<keyword id="KW-1185">Reference proteome</keyword>
<dbReference type="EMBL" id="FO081385">
    <property type="protein sequence ID" value="CCD71241.1"/>
    <property type="molecule type" value="Genomic_DNA"/>
</dbReference>
<dbReference type="PIR" id="S44826">
    <property type="entry name" value="S44826"/>
</dbReference>
<dbReference type="RefSeq" id="NP_498946.1">
    <property type="nucleotide sequence ID" value="NM_066545.4"/>
</dbReference>
<dbReference type="SMR" id="P34452"/>
<dbReference type="FunCoup" id="P34452">
    <property type="interactions" value="1749"/>
</dbReference>
<dbReference type="STRING" id="6239.F54F2.7.1"/>
<dbReference type="PaxDb" id="6239-F54F2.7"/>
<dbReference type="PeptideAtlas" id="P34452"/>
<dbReference type="EnsemblMetazoa" id="F54F2.7.1">
    <property type="protein sequence ID" value="F54F2.7.1"/>
    <property type="gene ID" value="WBGene00018835"/>
</dbReference>
<dbReference type="GeneID" id="176238"/>
<dbReference type="KEGG" id="cel:CELE_F54F2.7"/>
<dbReference type="UCSC" id="F54F2.7">
    <property type="organism name" value="c. elegans"/>
</dbReference>
<dbReference type="AGR" id="WB:WBGene00018835"/>
<dbReference type="CTD" id="176238"/>
<dbReference type="WormBase" id="F54F2.7">
    <property type="protein sequence ID" value="CE29395"/>
    <property type="gene ID" value="WBGene00018835"/>
</dbReference>
<dbReference type="eggNOG" id="KOG3266">
    <property type="taxonomic scope" value="Eukaryota"/>
</dbReference>
<dbReference type="GeneTree" id="ENSGT00450000040303"/>
<dbReference type="HOGENOM" id="CLU_1670913_0_0_1"/>
<dbReference type="InParanoid" id="P34452"/>
<dbReference type="OMA" id="TAPDNQG"/>
<dbReference type="OrthoDB" id="48130at2759"/>
<dbReference type="PhylomeDB" id="P34452"/>
<dbReference type="PRO" id="PR:P34452"/>
<dbReference type="Proteomes" id="UP000001940">
    <property type="component" value="Chromosome III"/>
</dbReference>
<dbReference type="Bgee" id="WBGene00018835">
    <property type="expression patterns" value="Expressed in germ line (C elegans) and 4 other cell types or tissues"/>
</dbReference>
<dbReference type="GO" id="GO:0030425">
    <property type="term" value="C:dendrite"/>
    <property type="evidence" value="ECO:0000318"/>
    <property type="project" value="GO_Central"/>
</dbReference>
<dbReference type="GO" id="GO:0032433">
    <property type="term" value="C:filopodium tip"/>
    <property type="evidence" value="ECO:0000318"/>
    <property type="project" value="GO_Central"/>
</dbReference>
<dbReference type="GO" id="GO:0030027">
    <property type="term" value="C:lamellipodium"/>
    <property type="evidence" value="ECO:0000318"/>
    <property type="project" value="GO_Central"/>
</dbReference>
<dbReference type="GO" id="GO:0005634">
    <property type="term" value="C:nucleus"/>
    <property type="evidence" value="ECO:0000318"/>
    <property type="project" value="GO_Central"/>
</dbReference>
<dbReference type="GO" id="GO:0051015">
    <property type="term" value="F:actin filament binding"/>
    <property type="evidence" value="ECO:0000318"/>
    <property type="project" value="GO_Central"/>
</dbReference>
<dbReference type="GO" id="GO:0003785">
    <property type="term" value="F:actin monomer binding"/>
    <property type="evidence" value="ECO:0000318"/>
    <property type="project" value="GO_Central"/>
</dbReference>
<dbReference type="GO" id="GO:0048813">
    <property type="term" value="P:dendrite morphogenesis"/>
    <property type="evidence" value="ECO:0000318"/>
    <property type="project" value="GO_Central"/>
</dbReference>
<dbReference type="GO" id="GO:0030833">
    <property type="term" value="P:regulation of actin filament polymerization"/>
    <property type="evidence" value="ECO:0000318"/>
    <property type="project" value="GO_Central"/>
</dbReference>
<dbReference type="GO" id="GO:0051489">
    <property type="term" value="P:regulation of filopodium assembly"/>
    <property type="evidence" value="ECO:0000318"/>
    <property type="project" value="GO_Central"/>
</dbReference>
<dbReference type="Gene3D" id="2.40.50.100">
    <property type="match status" value="1"/>
</dbReference>
<dbReference type="InterPro" id="IPR039169">
    <property type="entry name" value="Abitram"/>
</dbReference>
<dbReference type="InterPro" id="IPR011053">
    <property type="entry name" value="Single_hybrid_motif"/>
</dbReference>
<dbReference type="PANTHER" id="PTHR13651">
    <property type="entry name" value="PROTEIN ABITRAM"/>
    <property type="match status" value="1"/>
</dbReference>
<dbReference type="PANTHER" id="PTHR13651:SF0">
    <property type="entry name" value="PROTEIN ABITRAM"/>
    <property type="match status" value="1"/>
</dbReference>
<dbReference type="SUPFAM" id="SSF51230">
    <property type="entry name" value="Single hybrid motif"/>
    <property type="match status" value="1"/>
</dbReference>
<reference key="1">
    <citation type="journal article" date="1994" name="Nature">
        <title>2.2 Mb of contiguous nucleotide sequence from chromosome III of C. elegans.</title>
        <authorList>
            <person name="Wilson R."/>
            <person name="Ainscough R."/>
            <person name="Anderson K."/>
            <person name="Baynes C."/>
            <person name="Berks M."/>
            <person name="Bonfield J."/>
            <person name="Burton J."/>
            <person name="Connell M."/>
            <person name="Copsey T."/>
            <person name="Cooper J."/>
            <person name="Coulson A."/>
            <person name="Craxton M."/>
            <person name="Dear S."/>
            <person name="Du Z."/>
            <person name="Durbin R."/>
            <person name="Favello A."/>
            <person name="Fraser A."/>
            <person name="Fulton L."/>
            <person name="Gardner A."/>
            <person name="Green P."/>
            <person name="Hawkins T."/>
            <person name="Hillier L."/>
            <person name="Jier M."/>
            <person name="Johnston L."/>
            <person name="Jones M."/>
            <person name="Kershaw J."/>
            <person name="Kirsten J."/>
            <person name="Laisster N."/>
            <person name="Latreille P."/>
            <person name="Lightning J."/>
            <person name="Lloyd C."/>
            <person name="Mortimore B."/>
            <person name="O'Callaghan M."/>
            <person name="Parsons J."/>
            <person name="Percy C."/>
            <person name="Rifken L."/>
            <person name="Roopra A."/>
            <person name="Saunders D."/>
            <person name="Shownkeen R."/>
            <person name="Sims M."/>
            <person name="Smaldon N."/>
            <person name="Smith A."/>
            <person name="Smith M."/>
            <person name="Sonnhammer E."/>
            <person name="Staden R."/>
            <person name="Sulston J."/>
            <person name="Thierry-Mieg J."/>
            <person name="Thomas K."/>
            <person name="Vaudin M."/>
            <person name="Vaughan K."/>
            <person name="Waterston R."/>
            <person name="Watson A."/>
            <person name="Weinstock L."/>
            <person name="Wilkinson-Sproat J."/>
            <person name="Wohldman P."/>
        </authorList>
    </citation>
    <scope>NUCLEOTIDE SEQUENCE [LARGE SCALE GENOMIC DNA]</scope>
    <source>
        <strain>Bristol N2</strain>
    </source>
</reference>
<reference key="2">
    <citation type="journal article" date="1998" name="Science">
        <title>Genome sequence of the nematode C. elegans: a platform for investigating biology.</title>
        <authorList>
            <consortium name="The C. elegans sequencing consortium"/>
        </authorList>
    </citation>
    <scope>NUCLEOTIDE SEQUENCE [LARGE SCALE GENOMIC DNA]</scope>
    <source>
        <strain>Bristol N2</strain>
    </source>
</reference>
<gene>
    <name type="ORF">F54F2.7</name>
</gene>
<protein>
    <recommendedName>
        <fullName>Uncharacterized protein F54F2.7</fullName>
    </recommendedName>
</protein>
<organism>
    <name type="scientific">Caenorhabditis elegans</name>
    <dbReference type="NCBI Taxonomy" id="6239"/>
    <lineage>
        <taxon>Eukaryota</taxon>
        <taxon>Metazoa</taxon>
        <taxon>Ecdysozoa</taxon>
        <taxon>Nematoda</taxon>
        <taxon>Chromadorea</taxon>
        <taxon>Rhabditida</taxon>
        <taxon>Rhabditina</taxon>
        <taxon>Rhabditomorpha</taxon>
        <taxon>Rhabditoidea</taxon>
        <taxon>Rhabditidae</taxon>
        <taxon>Peloderinae</taxon>
        <taxon>Caenorhabditis</taxon>
    </lineage>
</organism>
<accession>P34452</accession>
<feature type="chain" id="PRO_0000065364" description="Uncharacterized protein F54F2.7">
    <location>
        <begin position="1"/>
        <end position="157"/>
    </location>
</feature>
<sequence>MSGHSYASVVDRIYSRKSSELYDNIAYLHHPSGVTVVVLRNIPESEVVEVDFGTTKKHGADRSTNQVSGKGKKGALILQPDSKLCTFKCKDGSEHVVRAGVRGTLVEMNDRLKTTPDFIRTAPDNQGFIAIITYGAGVRETEGMGDDLPPKRLFLKS</sequence>
<proteinExistence type="predicted"/>
<name>YMA7_CAEEL</name>